<sequence>MTHSPLAQFDIKKLIDIKMFGFDVSFTNSSIYMLLASILALTYFYLAFYNRKLVPSRLQVSAEIVYNLVADMLNQNIGVKGRKFIPLVFSLFIFILFCNLLGMTPYSFTATSHIIVTFTLAILVFLIVTIVGFVKHGLRFLTLFLPHGTPLWLAPLIIVIELFTYLARPVSLSLRLAANMMAGHVLLKVIAGFTVSLMIYLKFLPIPIMVILIGFEIFVAILQAYIFTILSCMYLNDAINLH</sequence>
<organism>
    <name type="scientific">Rickettsia peacockii (strain Rustic)</name>
    <dbReference type="NCBI Taxonomy" id="562019"/>
    <lineage>
        <taxon>Bacteria</taxon>
        <taxon>Pseudomonadati</taxon>
        <taxon>Pseudomonadota</taxon>
        <taxon>Alphaproteobacteria</taxon>
        <taxon>Rickettsiales</taxon>
        <taxon>Rickettsiaceae</taxon>
        <taxon>Rickettsieae</taxon>
        <taxon>Rickettsia</taxon>
        <taxon>spotted fever group</taxon>
    </lineage>
</organism>
<feature type="chain" id="PRO_1000215153" description="ATP synthase subunit a">
    <location>
        <begin position="1"/>
        <end position="242"/>
    </location>
</feature>
<feature type="transmembrane region" description="Helical" evidence="1">
    <location>
        <begin position="29"/>
        <end position="49"/>
    </location>
</feature>
<feature type="transmembrane region" description="Helical" evidence="1">
    <location>
        <begin position="84"/>
        <end position="104"/>
    </location>
</feature>
<feature type="transmembrane region" description="Helical" evidence="1">
    <location>
        <begin position="114"/>
        <end position="134"/>
    </location>
</feature>
<feature type="transmembrane region" description="Helical" evidence="1">
    <location>
        <begin position="140"/>
        <end position="160"/>
    </location>
</feature>
<feature type="transmembrane region" description="Helical" evidence="1">
    <location>
        <begin position="181"/>
        <end position="201"/>
    </location>
</feature>
<feature type="transmembrane region" description="Helical" evidence="1">
    <location>
        <begin position="203"/>
        <end position="223"/>
    </location>
</feature>
<gene>
    <name evidence="1" type="primary">atpB</name>
    <name type="ordered locus">RPR_01060</name>
</gene>
<keyword id="KW-0066">ATP synthesis</keyword>
<keyword id="KW-0997">Cell inner membrane</keyword>
<keyword id="KW-1003">Cell membrane</keyword>
<keyword id="KW-0138">CF(0)</keyword>
<keyword id="KW-0375">Hydrogen ion transport</keyword>
<keyword id="KW-0406">Ion transport</keyword>
<keyword id="KW-0472">Membrane</keyword>
<keyword id="KW-0812">Transmembrane</keyword>
<keyword id="KW-1133">Transmembrane helix</keyword>
<keyword id="KW-0813">Transport</keyword>
<protein>
    <recommendedName>
        <fullName evidence="1">ATP synthase subunit a</fullName>
    </recommendedName>
    <alternativeName>
        <fullName evidence="1">ATP synthase F0 sector subunit a</fullName>
    </alternativeName>
    <alternativeName>
        <fullName evidence="1">F-ATPase subunit 6</fullName>
    </alternativeName>
</protein>
<accession>C4K0P3</accession>
<name>ATP6_RICPU</name>
<comment type="function">
    <text evidence="1">Key component of the proton channel; it plays a direct role in the translocation of protons across the membrane.</text>
</comment>
<comment type="subunit">
    <text evidence="1">F-type ATPases have 2 components, CF(1) - the catalytic core - and CF(0) - the membrane proton channel. CF(1) has five subunits: alpha(3), beta(3), gamma(1), delta(1), epsilon(1). CF(0) has three main subunits: a(1), b(2) and c(9-12). The alpha and beta chains form an alternating ring which encloses part of the gamma chain. CF(1) is attached to CF(0) by a central stalk formed by the gamma and epsilon chains, while a peripheral stalk is formed by the delta and b chains.</text>
</comment>
<comment type="subcellular location">
    <subcellularLocation>
        <location evidence="1">Cell inner membrane</location>
        <topology evidence="1">Multi-pass membrane protein</topology>
    </subcellularLocation>
</comment>
<comment type="similarity">
    <text evidence="1">Belongs to the ATPase A chain family.</text>
</comment>
<evidence type="ECO:0000255" key="1">
    <source>
        <dbReference type="HAMAP-Rule" id="MF_01393"/>
    </source>
</evidence>
<reference key="1">
    <citation type="journal article" date="2009" name="PLoS ONE">
        <title>Genome sequence of the endosymbiont Rickettsia peacockii and comparison with virulent Rickettsia rickettsii: identification of virulence factors.</title>
        <authorList>
            <person name="Felsheim R.F."/>
            <person name="Kurtti T.J."/>
            <person name="Munderloh U.G."/>
        </authorList>
    </citation>
    <scope>NUCLEOTIDE SEQUENCE [LARGE SCALE GENOMIC DNA]</scope>
    <source>
        <strain>Rustic</strain>
    </source>
</reference>
<proteinExistence type="inferred from homology"/>
<dbReference type="EMBL" id="CP001227">
    <property type="protein sequence ID" value="ACR47144.1"/>
    <property type="molecule type" value="Genomic_DNA"/>
</dbReference>
<dbReference type="RefSeq" id="WP_012736439.1">
    <property type="nucleotide sequence ID" value="NC_012730.1"/>
</dbReference>
<dbReference type="SMR" id="C4K0P3"/>
<dbReference type="KEGG" id="rpk:RPR_01060"/>
<dbReference type="HOGENOM" id="CLU_041018_0_2_5"/>
<dbReference type="Proteomes" id="UP000005015">
    <property type="component" value="Chromosome"/>
</dbReference>
<dbReference type="GO" id="GO:0005886">
    <property type="term" value="C:plasma membrane"/>
    <property type="evidence" value="ECO:0007669"/>
    <property type="project" value="UniProtKB-SubCell"/>
</dbReference>
<dbReference type="GO" id="GO:0045259">
    <property type="term" value="C:proton-transporting ATP synthase complex"/>
    <property type="evidence" value="ECO:0007669"/>
    <property type="project" value="UniProtKB-KW"/>
</dbReference>
<dbReference type="GO" id="GO:0046933">
    <property type="term" value="F:proton-transporting ATP synthase activity, rotational mechanism"/>
    <property type="evidence" value="ECO:0007669"/>
    <property type="project" value="UniProtKB-UniRule"/>
</dbReference>
<dbReference type="CDD" id="cd00310">
    <property type="entry name" value="ATP-synt_Fo_a_6"/>
    <property type="match status" value="1"/>
</dbReference>
<dbReference type="FunFam" id="1.20.120.220:FF:000003">
    <property type="entry name" value="ATP synthase subunit a"/>
    <property type="match status" value="1"/>
</dbReference>
<dbReference type="Gene3D" id="1.20.120.220">
    <property type="entry name" value="ATP synthase, F0 complex, subunit A"/>
    <property type="match status" value="1"/>
</dbReference>
<dbReference type="HAMAP" id="MF_01393">
    <property type="entry name" value="ATP_synth_a_bact"/>
    <property type="match status" value="1"/>
</dbReference>
<dbReference type="InterPro" id="IPR000568">
    <property type="entry name" value="ATP_synth_F0_asu"/>
</dbReference>
<dbReference type="InterPro" id="IPR023011">
    <property type="entry name" value="ATP_synth_F0_asu_AS"/>
</dbReference>
<dbReference type="InterPro" id="IPR045083">
    <property type="entry name" value="ATP_synth_F0_asu_bact/mt"/>
</dbReference>
<dbReference type="InterPro" id="IPR035908">
    <property type="entry name" value="F0_ATP_A_sf"/>
</dbReference>
<dbReference type="NCBIfam" id="TIGR01131">
    <property type="entry name" value="ATP_synt_6_or_A"/>
    <property type="match status" value="1"/>
</dbReference>
<dbReference type="NCBIfam" id="NF004482">
    <property type="entry name" value="PRK05815.2-4"/>
    <property type="match status" value="1"/>
</dbReference>
<dbReference type="PANTHER" id="PTHR11410">
    <property type="entry name" value="ATP SYNTHASE SUBUNIT A"/>
    <property type="match status" value="1"/>
</dbReference>
<dbReference type="PANTHER" id="PTHR11410:SF0">
    <property type="entry name" value="ATP SYNTHASE SUBUNIT A"/>
    <property type="match status" value="1"/>
</dbReference>
<dbReference type="Pfam" id="PF00119">
    <property type="entry name" value="ATP-synt_A"/>
    <property type="match status" value="1"/>
</dbReference>
<dbReference type="PRINTS" id="PR00123">
    <property type="entry name" value="ATPASEA"/>
</dbReference>
<dbReference type="SUPFAM" id="SSF81336">
    <property type="entry name" value="F1F0 ATP synthase subunit A"/>
    <property type="match status" value="1"/>
</dbReference>
<dbReference type="PROSITE" id="PS00449">
    <property type="entry name" value="ATPASE_A"/>
    <property type="match status" value="1"/>
</dbReference>